<keyword id="KW-0963">Cytoplasm</keyword>
<keyword id="KW-0274">FAD</keyword>
<keyword id="KW-0285">Flavoprotein</keyword>
<keyword id="KW-0520">NAD</keyword>
<keyword id="KW-0819">tRNA processing</keyword>
<sequence>MKYSAGDFDVVVIGAGHAGCEAALASARMGCKTLICTMNLDSIALMACNPNIGGTAKGHLVREIDALGGEMGINIDHTFIQSRMLNTSKGPAVHSLRAQADKKRYSERMKHLLEKEDNVVLRQLEVIEIDVEDNEVKGVLTKNGAYFTTKAIILCTGTYLKGKIIIGDIIYSSGPSGLYPANDLSQSLLDLGINLRRFKTGTPARINKRSVDFSKMIEQPGDEKIVPFSFIHNKLDKDQISCYLTYTSEETHKIIHENIHRSPLYNGSIEGVGPRYCPSIEDKIVRFPDKDKHQIFIEPEGENTEELYVGGMSSSLPEDVQIKMYRSVPGLENAEILRTAYAIEYDCIDPQQLDLTLEFKNINGLYGAGQFNGSSGYEEAAAQGLIAGINAVLKIKEKNPLILKRSDAYIGVLIDDLVTKGTNEPYRMMTSRAEYRLLLRQDNADLRLTELGYKVGLVKEDRYNKFLNRKKNVENEIERLRNMQITGKREINEFLLEKGSTELKKPISLYELIKRPELDYFKVESLDDKRPSLSDDEKEEINIIAKYEGYINKQLEQVEQFKKYEDRLIPKSINYLDIKGLRLEAIQKLEKIKPINIGQASRISGVSPADISVLLIYMERKNREN</sequence>
<organism>
    <name type="scientific">Clostridium botulinum (strain ATCC 19397 / Type A)</name>
    <dbReference type="NCBI Taxonomy" id="441770"/>
    <lineage>
        <taxon>Bacteria</taxon>
        <taxon>Bacillati</taxon>
        <taxon>Bacillota</taxon>
        <taxon>Clostridia</taxon>
        <taxon>Eubacteriales</taxon>
        <taxon>Clostridiaceae</taxon>
        <taxon>Clostridium</taxon>
    </lineage>
</organism>
<dbReference type="EMBL" id="CP000726">
    <property type="protein sequence ID" value="ABS32418.1"/>
    <property type="molecule type" value="Genomic_DNA"/>
</dbReference>
<dbReference type="RefSeq" id="WP_012048454.1">
    <property type="nucleotide sequence ID" value="NC_009697.1"/>
</dbReference>
<dbReference type="SMR" id="A7FPL9"/>
<dbReference type="GeneID" id="5204343"/>
<dbReference type="KEGG" id="cba:CLB_3735"/>
<dbReference type="HOGENOM" id="CLU_007831_2_2_9"/>
<dbReference type="GO" id="GO:0005829">
    <property type="term" value="C:cytosol"/>
    <property type="evidence" value="ECO:0007669"/>
    <property type="project" value="TreeGrafter"/>
</dbReference>
<dbReference type="GO" id="GO:0050660">
    <property type="term" value="F:flavin adenine dinucleotide binding"/>
    <property type="evidence" value="ECO:0007669"/>
    <property type="project" value="UniProtKB-UniRule"/>
</dbReference>
<dbReference type="GO" id="GO:0030488">
    <property type="term" value="P:tRNA methylation"/>
    <property type="evidence" value="ECO:0007669"/>
    <property type="project" value="TreeGrafter"/>
</dbReference>
<dbReference type="GO" id="GO:0002098">
    <property type="term" value="P:tRNA wobble uridine modification"/>
    <property type="evidence" value="ECO:0007669"/>
    <property type="project" value="InterPro"/>
</dbReference>
<dbReference type="FunFam" id="1.10.10.1800:FF:000001">
    <property type="entry name" value="tRNA uridine 5-carboxymethylaminomethyl modification enzyme MnmG"/>
    <property type="match status" value="1"/>
</dbReference>
<dbReference type="FunFam" id="1.10.150.570:FF:000001">
    <property type="entry name" value="tRNA uridine 5-carboxymethylaminomethyl modification enzyme MnmG"/>
    <property type="match status" value="1"/>
</dbReference>
<dbReference type="FunFam" id="3.50.50.60:FF:000002">
    <property type="entry name" value="tRNA uridine 5-carboxymethylaminomethyl modification enzyme MnmG"/>
    <property type="match status" value="1"/>
</dbReference>
<dbReference type="FunFam" id="3.50.50.60:FF:000063">
    <property type="entry name" value="tRNA uridine 5-carboxymethylaminomethyl modification enzyme MnmG"/>
    <property type="match status" value="1"/>
</dbReference>
<dbReference type="Gene3D" id="3.50.50.60">
    <property type="entry name" value="FAD/NAD(P)-binding domain"/>
    <property type="match status" value="2"/>
</dbReference>
<dbReference type="Gene3D" id="1.10.150.570">
    <property type="entry name" value="GidA associated domain, C-terminal subdomain"/>
    <property type="match status" value="1"/>
</dbReference>
<dbReference type="Gene3D" id="1.10.10.1800">
    <property type="entry name" value="tRNA uridine 5-carboxymethylaminomethyl modification enzyme MnmG/GidA"/>
    <property type="match status" value="1"/>
</dbReference>
<dbReference type="HAMAP" id="MF_00129">
    <property type="entry name" value="MnmG_GidA"/>
    <property type="match status" value="1"/>
</dbReference>
<dbReference type="InterPro" id="IPR036188">
    <property type="entry name" value="FAD/NAD-bd_sf"/>
</dbReference>
<dbReference type="InterPro" id="IPR049312">
    <property type="entry name" value="GIDA_C_N"/>
</dbReference>
<dbReference type="InterPro" id="IPR004416">
    <property type="entry name" value="MnmG"/>
</dbReference>
<dbReference type="InterPro" id="IPR002218">
    <property type="entry name" value="MnmG-rel"/>
</dbReference>
<dbReference type="InterPro" id="IPR020595">
    <property type="entry name" value="MnmG-rel_CS"/>
</dbReference>
<dbReference type="InterPro" id="IPR026904">
    <property type="entry name" value="MnmG_C"/>
</dbReference>
<dbReference type="InterPro" id="IPR047001">
    <property type="entry name" value="MnmG_C_subdom"/>
</dbReference>
<dbReference type="InterPro" id="IPR044920">
    <property type="entry name" value="MnmG_C_subdom_sf"/>
</dbReference>
<dbReference type="InterPro" id="IPR040131">
    <property type="entry name" value="MnmG_N"/>
</dbReference>
<dbReference type="NCBIfam" id="TIGR00136">
    <property type="entry name" value="mnmG_gidA"/>
    <property type="match status" value="1"/>
</dbReference>
<dbReference type="PANTHER" id="PTHR11806">
    <property type="entry name" value="GLUCOSE INHIBITED DIVISION PROTEIN A"/>
    <property type="match status" value="1"/>
</dbReference>
<dbReference type="PANTHER" id="PTHR11806:SF0">
    <property type="entry name" value="PROTEIN MTO1 HOMOLOG, MITOCHONDRIAL"/>
    <property type="match status" value="1"/>
</dbReference>
<dbReference type="Pfam" id="PF01134">
    <property type="entry name" value="GIDA"/>
    <property type="match status" value="1"/>
</dbReference>
<dbReference type="Pfam" id="PF21680">
    <property type="entry name" value="GIDA_C_1st"/>
    <property type="match status" value="1"/>
</dbReference>
<dbReference type="Pfam" id="PF13932">
    <property type="entry name" value="SAM_GIDA_C"/>
    <property type="match status" value="1"/>
</dbReference>
<dbReference type="PRINTS" id="PR00411">
    <property type="entry name" value="PNDRDTASEI"/>
</dbReference>
<dbReference type="SMART" id="SM01228">
    <property type="entry name" value="GIDA_assoc_3"/>
    <property type="match status" value="1"/>
</dbReference>
<dbReference type="SUPFAM" id="SSF51905">
    <property type="entry name" value="FAD/NAD(P)-binding domain"/>
    <property type="match status" value="1"/>
</dbReference>
<dbReference type="PROSITE" id="PS01280">
    <property type="entry name" value="GIDA_1"/>
    <property type="match status" value="1"/>
</dbReference>
<dbReference type="PROSITE" id="PS01281">
    <property type="entry name" value="GIDA_2"/>
    <property type="match status" value="1"/>
</dbReference>
<reference key="1">
    <citation type="journal article" date="2007" name="PLoS ONE">
        <title>Analysis of the neurotoxin complex genes in Clostridium botulinum A1-A4 and B1 strains: BoNT/A3, /Ba4 and /B1 clusters are located within plasmids.</title>
        <authorList>
            <person name="Smith T.J."/>
            <person name="Hill K.K."/>
            <person name="Foley B.T."/>
            <person name="Detter J.C."/>
            <person name="Munk A.C."/>
            <person name="Bruce D.C."/>
            <person name="Doggett N.A."/>
            <person name="Smith L.A."/>
            <person name="Marks J.D."/>
            <person name="Xie G."/>
            <person name="Brettin T.S."/>
        </authorList>
    </citation>
    <scope>NUCLEOTIDE SEQUENCE [LARGE SCALE GENOMIC DNA]</scope>
    <source>
        <strain>ATCC 19397 / Type A</strain>
    </source>
</reference>
<evidence type="ECO:0000255" key="1">
    <source>
        <dbReference type="HAMAP-Rule" id="MF_00129"/>
    </source>
</evidence>
<protein>
    <recommendedName>
        <fullName evidence="1">tRNA uridine 5-carboxymethylaminomethyl modification enzyme MnmG</fullName>
    </recommendedName>
    <alternativeName>
        <fullName evidence="1">Glucose-inhibited division protein A</fullName>
    </alternativeName>
</protein>
<name>MNMG_CLOB1</name>
<comment type="function">
    <text evidence="1">NAD-binding protein involved in the addition of a carboxymethylaminomethyl (cmnm) group at the wobble position (U34) of certain tRNAs, forming tRNA-cmnm(5)s(2)U34.</text>
</comment>
<comment type="cofactor">
    <cofactor evidence="1">
        <name>FAD</name>
        <dbReference type="ChEBI" id="CHEBI:57692"/>
    </cofactor>
</comment>
<comment type="subunit">
    <text evidence="1">Homodimer. Heterotetramer of two MnmE and two MnmG subunits.</text>
</comment>
<comment type="subcellular location">
    <subcellularLocation>
        <location evidence="1">Cytoplasm</location>
    </subcellularLocation>
</comment>
<comment type="similarity">
    <text evidence="1">Belongs to the MnmG family.</text>
</comment>
<accession>A7FPL9</accession>
<proteinExistence type="inferred from homology"/>
<gene>
    <name evidence="1" type="primary">mnmG</name>
    <name evidence="1" type="synonym">gidA</name>
    <name type="ordered locus">CLB_3735</name>
</gene>
<feature type="chain" id="PRO_1000016581" description="tRNA uridine 5-carboxymethylaminomethyl modification enzyme MnmG">
    <location>
        <begin position="1"/>
        <end position="625"/>
    </location>
</feature>
<feature type="binding site" evidence="1">
    <location>
        <begin position="14"/>
        <end position="19"/>
    </location>
    <ligand>
        <name>FAD</name>
        <dbReference type="ChEBI" id="CHEBI:57692"/>
    </ligand>
</feature>
<feature type="binding site" evidence="1">
    <location>
        <begin position="273"/>
        <end position="287"/>
    </location>
    <ligand>
        <name>NAD(+)</name>
        <dbReference type="ChEBI" id="CHEBI:57540"/>
    </ligand>
</feature>